<evidence type="ECO:0000255" key="1">
    <source>
        <dbReference type="HAMAP-Rule" id="MF_01615"/>
    </source>
</evidence>
<comment type="function">
    <text evidence="1">Catalyzes the hydrolysis of glutamine to glutamate and ammonia as part of the biosynthesis of pyridoxal 5'-phosphate. The resulting ammonia molecule is channeled to the active site of PdxS.</text>
</comment>
<comment type="catalytic activity">
    <reaction evidence="1">
        <text>aldehydo-D-ribose 5-phosphate + D-glyceraldehyde 3-phosphate + L-glutamine = pyridoxal 5'-phosphate + L-glutamate + phosphate + 3 H2O + H(+)</text>
        <dbReference type="Rhea" id="RHEA:31507"/>
        <dbReference type="ChEBI" id="CHEBI:15377"/>
        <dbReference type="ChEBI" id="CHEBI:15378"/>
        <dbReference type="ChEBI" id="CHEBI:29985"/>
        <dbReference type="ChEBI" id="CHEBI:43474"/>
        <dbReference type="ChEBI" id="CHEBI:58273"/>
        <dbReference type="ChEBI" id="CHEBI:58359"/>
        <dbReference type="ChEBI" id="CHEBI:59776"/>
        <dbReference type="ChEBI" id="CHEBI:597326"/>
        <dbReference type="EC" id="4.3.3.6"/>
    </reaction>
</comment>
<comment type="catalytic activity">
    <reaction evidence="1">
        <text>L-glutamine + H2O = L-glutamate + NH4(+)</text>
        <dbReference type="Rhea" id="RHEA:15889"/>
        <dbReference type="ChEBI" id="CHEBI:15377"/>
        <dbReference type="ChEBI" id="CHEBI:28938"/>
        <dbReference type="ChEBI" id="CHEBI:29985"/>
        <dbReference type="ChEBI" id="CHEBI:58359"/>
        <dbReference type="EC" id="3.5.1.2"/>
    </reaction>
</comment>
<comment type="pathway">
    <text evidence="1">Cofactor biosynthesis; pyridoxal 5'-phosphate biosynthesis.</text>
</comment>
<comment type="subunit">
    <text evidence="1">In the presence of PdxS, forms a dodecamer of heterodimers. Only shows activity in the heterodimer.</text>
</comment>
<comment type="similarity">
    <text evidence="1">Belongs to the glutaminase PdxT/SNO family.</text>
</comment>
<proteinExistence type="inferred from homology"/>
<reference key="1">
    <citation type="journal article" date="2006" name="J. Bacteriol.">
        <title>Pathogenomic sequence analysis of Bacillus cereus and Bacillus thuringiensis isolates closely related to Bacillus anthracis.</title>
        <authorList>
            <person name="Han C.S."/>
            <person name="Xie G."/>
            <person name="Challacombe J.F."/>
            <person name="Altherr M.R."/>
            <person name="Bhotika S.S."/>
            <person name="Bruce D."/>
            <person name="Campbell C.S."/>
            <person name="Campbell M.L."/>
            <person name="Chen J."/>
            <person name="Chertkov O."/>
            <person name="Cleland C."/>
            <person name="Dimitrijevic M."/>
            <person name="Doggett N.A."/>
            <person name="Fawcett J.J."/>
            <person name="Glavina T."/>
            <person name="Goodwin L.A."/>
            <person name="Hill K.K."/>
            <person name="Hitchcock P."/>
            <person name="Jackson P.J."/>
            <person name="Keim P."/>
            <person name="Kewalramani A.R."/>
            <person name="Longmire J."/>
            <person name="Lucas S."/>
            <person name="Malfatti S."/>
            <person name="McMurry K."/>
            <person name="Meincke L.J."/>
            <person name="Misra M."/>
            <person name="Moseman B.L."/>
            <person name="Mundt M."/>
            <person name="Munk A.C."/>
            <person name="Okinaka R.T."/>
            <person name="Parson-Quintana B."/>
            <person name="Reilly L.P."/>
            <person name="Richardson P."/>
            <person name="Robinson D.L."/>
            <person name="Rubin E."/>
            <person name="Saunders E."/>
            <person name="Tapia R."/>
            <person name="Tesmer J.G."/>
            <person name="Thayer N."/>
            <person name="Thompson L.S."/>
            <person name="Tice H."/>
            <person name="Ticknor L.O."/>
            <person name="Wills P.L."/>
            <person name="Brettin T.S."/>
            <person name="Gilna P."/>
        </authorList>
    </citation>
    <scope>NUCLEOTIDE SEQUENCE [LARGE SCALE GENOMIC DNA]</scope>
    <source>
        <strain>97-27</strain>
    </source>
</reference>
<protein>
    <recommendedName>
        <fullName evidence="1">Pyridoxal 5'-phosphate synthase subunit PdxT</fullName>
        <ecNumber evidence="1">4.3.3.6</ecNumber>
    </recommendedName>
    <alternativeName>
        <fullName evidence="1">Pdx2</fullName>
    </alternativeName>
    <alternativeName>
        <fullName evidence="1">Pyridoxal 5'-phosphate synthase glutaminase subunit</fullName>
        <ecNumber evidence="1">3.5.1.2</ecNumber>
    </alternativeName>
</protein>
<gene>
    <name evidence="1" type="primary">pdxT</name>
    <name type="ordered locus">BT9727_0012</name>
</gene>
<sequence length="196" mass="21460">MVKIGVLGLQGAVREHVKSVEASGAEAVVVKRIEQLEEIDGLILPGGESTTMRRLIDKYDFMEPLRTFAKSGKPMFGTCAGMILLAKTLIGYDEAHIGAMDITVERNAFGRQKDSFEAALSIKGVGEDFVGVFIRAPYVVDVADDVEVLSTHGDRMVAVRQGPFLAASFHPELTDDHRVTAYFVEMVKEAKMKKVV</sequence>
<keyword id="KW-0315">Glutamine amidotransferase</keyword>
<keyword id="KW-0378">Hydrolase</keyword>
<keyword id="KW-0456">Lyase</keyword>
<keyword id="KW-0663">Pyridoxal phosphate</keyword>
<feature type="chain" id="PRO_0000135628" description="Pyridoxal 5'-phosphate synthase subunit PdxT">
    <location>
        <begin position="1"/>
        <end position="196"/>
    </location>
</feature>
<feature type="active site" description="Nucleophile" evidence="1">
    <location>
        <position position="79"/>
    </location>
</feature>
<feature type="active site" description="Charge relay system" evidence="1">
    <location>
        <position position="170"/>
    </location>
</feature>
<feature type="active site" description="Charge relay system" evidence="1">
    <location>
        <position position="172"/>
    </location>
</feature>
<feature type="binding site" evidence="1">
    <location>
        <begin position="47"/>
        <end position="49"/>
    </location>
    <ligand>
        <name>L-glutamine</name>
        <dbReference type="ChEBI" id="CHEBI:58359"/>
    </ligand>
</feature>
<feature type="binding site" evidence="1">
    <location>
        <position position="106"/>
    </location>
    <ligand>
        <name>L-glutamine</name>
        <dbReference type="ChEBI" id="CHEBI:58359"/>
    </ligand>
</feature>
<feature type="binding site" evidence="1">
    <location>
        <begin position="134"/>
        <end position="135"/>
    </location>
    <ligand>
        <name>L-glutamine</name>
        <dbReference type="ChEBI" id="CHEBI:58359"/>
    </ligand>
</feature>
<accession>Q6HQ04</accession>
<dbReference type="EC" id="4.3.3.6" evidence="1"/>
<dbReference type="EC" id="3.5.1.2" evidence="1"/>
<dbReference type="EMBL" id="AE017355">
    <property type="protein sequence ID" value="AAT61222.1"/>
    <property type="molecule type" value="Genomic_DNA"/>
</dbReference>
<dbReference type="RefSeq" id="WP_000238799.1">
    <property type="nucleotide sequence ID" value="NC_005957.1"/>
</dbReference>
<dbReference type="RefSeq" id="YP_034371.1">
    <property type="nucleotide sequence ID" value="NC_005957.1"/>
</dbReference>
<dbReference type="SMR" id="Q6HQ04"/>
<dbReference type="KEGG" id="btk:BT9727_0012"/>
<dbReference type="PATRIC" id="fig|281309.8.peg.12"/>
<dbReference type="HOGENOM" id="CLU_069674_2_0_9"/>
<dbReference type="UniPathway" id="UPA00245"/>
<dbReference type="Proteomes" id="UP000001301">
    <property type="component" value="Chromosome"/>
</dbReference>
<dbReference type="GO" id="GO:0005829">
    <property type="term" value="C:cytosol"/>
    <property type="evidence" value="ECO:0007669"/>
    <property type="project" value="TreeGrafter"/>
</dbReference>
<dbReference type="GO" id="GO:1903600">
    <property type="term" value="C:glutaminase complex"/>
    <property type="evidence" value="ECO:0007669"/>
    <property type="project" value="TreeGrafter"/>
</dbReference>
<dbReference type="GO" id="GO:0004359">
    <property type="term" value="F:glutaminase activity"/>
    <property type="evidence" value="ECO:0007669"/>
    <property type="project" value="UniProtKB-UniRule"/>
</dbReference>
<dbReference type="GO" id="GO:0036381">
    <property type="term" value="F:pyridoxal 5'-phosphate synthase (glutamine hydrolysing) activity"/>
    <property type="evidence" value="ECO:0007669"/>
    <property type="project" value="UniProtKB-UniRule"/>
</dbReference>
<dbReference type="GO" id="GO:0006543">
    <property type="term" value="P:glutamine catabolic process"/>
    <property type="evidence" value="ECO:0007669"/>
    <property type="project" value="UniProtKB-UniRule"/>
</dbReference>
<dbReference type="GO" id="GO:0042823">
    <property type="term" value="P:pyridoxal phosphate biosynthetic process"/>
    <property type="evidence" value="ECO:0007669"/>
    <property type="project" value="UniProtKB-UniRule"/>
</dbReference>
<dbReference type="GO" id="GO:0008614">
    <property type="term" value="P:pyridoxine metabolic process"/>
    <property type="evidence" value="ECO:0007669"/>
    <property type="project" value="TreeGrafter"/>
</dbReference>
<dbReference type="CDD" id="cd01749">
    <property type="entry name" value="GATase1_PB"/>
    <property type="match status" value="1"/>
</dbReference>
<dbReference type="FunFam" id="3.40.50.880:FF:000010">
    <property type="entry name" value="uncharacterized protein LOC100176842 isoform X2"/>
    <property type="match status" value="1"/>
</dbReference>
<dbReference type="Gene3D" id="3.40.50.880">
    <property type="match status" value="1"/>
</dbReference>
<dbReference type="HAMAP" id="MF_01615">
    <property type="entry name" value="PdxT"/>
    <property type="match status" value="1"/>
</dbReference>
<dbReference type="InterPro" id="IPR029062">
    <property type="entry name" value="Class_I_gatase-like"/>
</dbReference>
<dbReference type="InterPro" id="IPR002161">
    <property type="entry name" value="PdxT/SNO"/>
</dbReference>
<dbReference type="InterPro" id="IPR021196">
    <property type="entry name" value="PdxT/SNO_CS"/>
</dbReference>
<dbReference type="NCBIfam" id="TIGR03800">
    <property type="entry name" value="PLP_synth_Pdx2"/>
    <property type="match status" value="1"/>
</dbReference>
<dbReference type="PANTHER" id="PTHR31559">
    <property type="entry name" value="PYRIDOXAL 5'-PHOSPHATE SYNTHASE SUBUNIT SNO"/>
    <property type="match status" value="1"/>
</dbReference>
<dbReference type="PANTHER" id="PTHR31559:SF0">
    <property type="entry name" value="PYRIDOXAL 5'-PHOSPHATE SYNTHASE SUBUNIT SNO1-RELATED"/>
    <property type="match status" value="1"/>
</dbReference>
<dbReference type="Pfam" id="PF01174">
    <property type="entry name" value="SNO"/>
    <property type="match status" value="1"/>
</dbReference>
<dbReference type="PIRSF" id="PIRSF005639">
    <property type="entry name" value="Glut_amidoT_SNO"/>
    <property type="match status" value="1"/>
</dbReference>
<dbReference type="SUPFAM" id="SSF52317">
    <property type="entry name" value="Class I glutamine amidotransferase-like"/>
    <property type="match status" value="1"/>
</dbReference>
<dbReference type="PROSITE" id="PS01236">
    <property type="entry name" value="PDXT_SNO_1"/>
    <property type="match status" value="1"/>
</dbReference>
<dbReference type="PROSITE" id="PS51130">
    <property type="entry name" value="PDXT_SNO_2"/>
    <property type="match status" value="1"/>
</dbReference>
<organism>
    <name type="scientific">Bacillus thuringiensis subsp. konkukian (strain 97-27)</name>
    <dbReference type="NCBI Taxonomy" id="281309"/>
    <lineage>
        <taxon>Bacteria</taxon>
        <taxon>Bacillati</taxon>
        <taxon>Bacillota</taxon>
        <taxon>Bacilli</taxon>
        <taxon>Bacillales</taxon>
        <taxon>Bacillaceae</taxon>
        <taxon>Bacillus</taxon>
        <taxon>Bacillus cereus group</taxon>
    </lineage>
</organism>
<name>PDXT_BACHK</name>